<dbReference type="EMBL" id="CP000948">
    <property type="protein sequence ID" value="ACB04941.1"/>
    <property type="molecule type" value="Genomic_DNA"/>
</dbReference>
<dbReference type="RefSeq" id="WP_000872908.1">
    <property type="nucleotide sequence ID" value="NC_010473.1"/>
</dbReference>
<dbReference type="SMR" id="B1XB95"/>
<dbReference type="GeneID" id="93777969"/>
<dbReference type="KEGG" id="ecd:ECDH10B_4118"/>
<dbReference type="HOGENOM" id="CLU_072626_4_0_6"/>
<dbReference type="GO" id="GO:0005829">
    <property type="term" value="C:cytosol"/>
    <property type="evidence" value="ECO:0007669"/>
    <property type="project" value="TreeGrafter"/>
</dbReference>
<dbReference type="GO" id="GO:0060698">
    <property type="term" value="F:endoribonuclease inhibitor activity"/>
    <property type="evidence" value="ECO:0007669"/>
    <property type="project" value="UniProtKB-UniRule"/>
</dbReference>
<dbReference type="GO" id="GO:0019899">
    <property type="term" value="F:enzyme binding"/>
    <property type="evidence" value="ECO:0007669"/>
    <property type="project" value="UniProtKB-UniRule"/>
</dbReference>
<dbReference type="GO" id="GO:1902369">
    <property type="term" value="P:negative regulation of RNA catabolic process"/>
    <property type="evidence" value="ECO:0007669"/>
    <property type="project" value="TreeGrafter"/>
</dbReference>
<dbReference type="CDD" id="cd16841">
    <property type="entry name" value="RraA_family"/>
    <property type="match status" value="1"/>
</dbReference>
<dbReference type="FunFam" id="3.50.30.40:FF:000001">
    <property type="entry name" value="Regulator of ribonuclease activity A"/>
    <property type="match status" value="1"/>
</dbReference>
<dbReference type="Gene3D" id="3.50.30.40">
    <property type="entry name" value="Ribonuclease E inhibitor RraA/RraA-like"/>
    <property type="match status" value="1"/>
</dbReference>
<dbReference type="HAMAP" id="MF_00471">
    <property type="entry name" value="RraA"/>
    <property type="match status" value="1"/>
</dbReference>
<dbReference type="InterPro" id="IPR010203">
    <property type="entry name" value="RraA"/>
</dbReference>
<dbReference type="InterPro" id="IPR005493">
    <property type="entry name" value="RraA/RraA-like"/>
</dbReference>
<dbReference type="InterPro" id="IPR036704">
    <property type="entry name" value="RraA/RraA-like_sf"/>
</dbReference>
<dbReference type="InterPro" id="IPR014339">
    <property type="entry name" value="RraA_gpbac"/>
</dbReference>
<dbReference type="NCBIfam" id="TIGR01935">
    <property type="entry name" value="NOT-MenG"/>
    <property type="match status" value="1"/>
</dbReference>
<dbReference type="NCBIfam" id="NF006875">
    <property type="entry name" value="PRK09372.1"/>
    <property type="match status" value="1"/>
</dbReference>
<dbReference type="NCBIfam" id="TIGR02998">
    <property type="entry name" value="RraA_entero"/>
    <property type="match status" value="1"/>
</dbReference>
<dbReference type="PANTHER" id="PTHR33254">
    <property type="entry name" value="4-HYDROXY-4-METHYL-2-OXOGLUTARATE ALDOLASE 3-RELATED"/>
    <property type="match status" value="1"/>
</dbReference>
<dbReference type="PANTHER" id="PTHR33254:SF29">
    <property type="entry name" value="REGULATOR OF RIBONUCLEASE ACTIVITY A"/>
    <property type="match status" value="1"/>
</dbReference>
<dbReference type="Pfam" id="PF03737">
    <property type="entry name" value="RraA-like"/>
    <property type="match status" value="1"/>
</dbReference>
<dbReference type="SUPFAM" id="SSF89562">
    <property type="entry name" value="RraA-like"/>
    <property type="match status" value="1"/>
</dbReference>
<sequence length="161" mass="17360">MKYDTSELCDIYQEDVNVVEPLFSNFGGRASFGGQIITVKCFEDNGLLYDLLEQNGRGRVLVVDGGGSVRRALVDAELARLAVQNEWEGLVIYGAVRQVDDLEELDIGIQAMAAIPVGAAGEGIGESDVRVNFGGVTFFSGDHLYADNTGIILSEDPLDIE</sequence>
<feature type="chain" id="PRO_1000194854" description="Regulator of ribonuclease activity A">
    <location>
        <begin position="1"/>
        <end position="161"/>
    </location>
</feature>
<protein>
    <recommendedName>
        <fullName evidence="1">Regulator of ribonuclease activity A</fullName>
    </recommendedName>
</protein>
<reference key="1">
    <citation type="journal article" date="2008" name="J. Bacteriol.">
        <title>The complete genome sequence of Escherichia coli DH10B: insights into the biology of a laboratory workhorse.</title>
        <authorList>
            <person name="Durfee T."/>
            <person name="Nelson R."/>
            <person name="Baldwin S."/>
            <person name="Plunkett G. III"/>
            <person name="Burland V."/>
            <person name="Mau B."/>
            <person name="Petrosino J.F."/>
            <person name="Qin X."/>
            <person name="Muzny D.M."/>
            <person name="Ayele M."/>
            <person name="Gibbs R.A."/>
            <person name="Csorgo B."/>
            <person name="Posfai G."/>
            <person name="Weinstock G.M."/>
            <person name="Blattner F.R."/>
        </authorList>
    </citation>
    <scope>NUCLEOTIDE SEQUENCE [LARGE SCALE GENOMIC DNA]</scope>
    <source>
        <strain>K12 / DH10B</strain>
    </source>
</reference>
<proteinExistence type="inferred from homology"/>
<keyword id="KW-0963">Cytoplasm</keyword>
<evidence type="ECO:0000255" key="1">
    <source>
        <dbReference type="HAMAP-Rule" id="MF_00471"/>
    </source>
</evidence>
<organism>
    <name type="scientific">Escherichia coli (strain K12 / DH10B)</name>
    <dbReference type="NCBI Taxonomy" id="316385"/>
    <lineage>
        <taxon>Bacteria</taxon>
        <taxon>Pseudomonadati</taxon>
        <taxon>Pseudomonadota</taxon>
        <taxon>Gammaproteobacteria</taxon>
        <taxon>Enterobacterales</taxon>
        <taxon>Enterobacteriaceae</taxon>
        <taxon>Escherichia</taxon>
    </lineage>
</organism>
<comment type="function">
    <text evidence="1">Globally modulates RNA abundance by binding to RNase E (Rne) and regulating its endonucleolytic activity. Can modulate Rne action in a substrate-dependent manner by altering the composition of the degradosome. Modulates RNA-binding and helicase activities of the degradosome.</text>
</comment>
<comment type="subunit">
    <text evidence="1">Homotrimer. Binds to both RNA-binding sites in the C-terminal region of Rne and to RhlB.</text>
</comment>
<comment type="subcellular location">
    <subcellularLocation>
        <location evidence="1">Cytoplasm</location>
    </subcellularLocation>
</comment>
<comment type="similarity">
    <text evidence="1">Belongs to the RraA family.</text>
</comment>
<gene>
    <name evidence="1" type="primary">rraA</name>
    <name type="ordered locus">ECDH10B_4118</name>
</gene>
<accession>B1XB95</accession>
<name>RRAA_ECODH</name>